<organism>
    <name type="scientific">Mus musculus</name>
    <name type="common">Mouse</name>
    <dbReference type="NCBI Taxonomy" id="10090"/>
    <lineage>
        <taxon>Eukaryota</taxon>
        <taxon>Metazoa</taxon>
        <taxon>Chordata</taxon>
        <taxon>Craniata</taxon>
        <taxon>Vertebrata</taxon>
        <taxon>Euteleostomi</taxon>
        <taxon>Mammalia</taxon>
        <taxon>Eutheria</taxon>
        <taxon>Euarchontoglires</taxon>
        <taxon>Glires</taxon>
        <taxon>Rodentia</taxon>
        <taxon>Myomorpha</taxon>
        <taxon>Muroidea</taxon>
        <taxon>Muridae</taxon>
        <taxon>Murinae</taxon>
        <taxon>Mus</taxon>
        <taxon>Mus</taxon>
    </lineage>
</organism>
<proteinExistence type="evidence at protein level"/>
<gene>
    <name type="primary">Clec2l</name>
</gene>
<name>CLC2L_MOUSE</name>
<keyword id="KW-1015">Disulfide bond</keyword>
<keyword id="KW-0430">Lectin</keyword>
<keyword id="KW-0472">Membrane</keyword>
<keyword id="KW-0597">Phosphoprotein</keyword>
<keyword id="KW-1185">Reference proteome</keyword>
<keyword id="KW-0812">Transmembrane</keyword>
<keyword id="KW-1133">Transmembrane helix</keyword>
<sequence>MEPAREPPARARPPPPAARPAPAAPRPRSPAEAEARGPEGLLRRSGSGYEGSTSWKAALEDTTTRLLLGAIAVLLFAILVVMSILASKGCIKCETPCPEDWLLYGRKCYYFSEEPRDWNTGRQYCHTHEAALAVIQSQKELEFMFKFTRREPWIGLRRVGDDFHWVNGDPFDPDTFTISGMGECVFVEPTRLVSTECLTTRPWVCSKMAYT</sequence>
<reference key="1">
    <citation type="journal article" date="2009" name="PLoS Biol.">
        <title>Lineage-specific biology revealed by a finished genome assembly of the mouse.</title>
        <authorList>
            <person name="Church D.M."/>
            <person name="Goodstadt L."/>
            <person name="Hillier L.W."/>
            <person name="Zody M.C."/>
            <person name="Goldstein S."/>
            <person name="She X."/>
            <person name="Bult C.J."/>
            <person name="Agarwala R."/>
            <person name="Cherry J.L."/>
            <person name="DiCuccio M."/>
            <person name="Hlavina W."/>
            <person name="Kapustin Y."/>
            <person name="Meric P."/>
            <person name="Maglott D."/>
            <person name="Birtle Z."/>
            <person name="Marques A.C."/>
            <person name="Graves T."/>
            <person name="Zhou S."/>
            <person name="Teague B."/>
            <person name="Potamousis K."/>
            <person name="Churas C."/>
            <person name="Place M."/>
            <person name="Herschleb J."/>
            <person name="Runnheim R."/>
            <person name="Forrest D."/>
            <person name="Amos-Landgraf J."/>
            <person name="Schwartz D.C."/>
            <person name="Cheng Z."/>
            <person name="Lindblad-Toh K."/>
            <person name="Eichler E.E."/>
            <person name="Ponting C.P."/>
        </authorList>
    </citation>
    <scope>NUCLEOTIDE SEQUENCE [LARGE SCALE GENOMIC DNA]</scope>
    <source>
        <strain>C57BL/6J</strain>
    </source>
</reference>
<reference key="2">
    <citation type="journal article" date="2010" name="Cell">
        <title>A tissue-specific atlas of mouse protein phosphorylation and expression.</title>
        <authorList>
            <person name="Huttlin E.L."/>
            <person name="Jedrychowski M.P."/>
            <person name="Elias J.E."/>
            <person name="Goswami T."/>
            <person name="Rad R."/>
            <person name="Beausoleil S.A."/>
            <person name="Villen J."/>
            <person name="Haas W."/>
            <person name="Sowa M.E."/>
            <person name="Gygi S.P."/>
        </authorList>
    </citation>
    <scope>IDENTIFICATION BY MASS SPECTROMETRY [LARGE SCALE ANALYSIS]</scope>
    <source>
        <tissue>Brain</tissue>
    </source>
</reference>
<dbReference type="EMBL" id="AC161147">
    <property type="status" value="NOT_ANNOTATED_CDS"/>
    <property type="molecule type" value="Genomic_DNA"/>
</dbReference>
<dbReference type="CCDS" id="CCDS57419.1"/>
<dbReference type="RefSeq" id="NP_001094977.1">
    <property type="nucleotide sequence ID" value="NM_001101507.1"/>
</dbReference>
<dbReference type="SMR" id="P0C7M9"/>
<dbReference type="FunCoup" id="P0C7M9">
    <property type="interactions" value="11"/>
</dbReference>
<dbReference type="STRING" id="10090.ENSMUSP00000110524"/>
<dbReference type="iPTMnet" id="P0C7M9"/>
<dbReference type="PhosphoSitePlus" id="P0C7M9"/>
<dbReference type="SwissPalm" id="P0C7M9"/>
<dbReference type="PaxDb" id="10090-ENSMUSP00000110524"/>
<dbReference type="PeptideAtlas" id="P0C7M9"/>
<dbReference type="ProteomicsDB" id="279103"/>
<dbReference type="Antibodypedia" id="52522">
    <property type="antibodies" value="60 antibodies from 14 providers"/>
</dbReference>
<dbReference type="Ensembl" id="ENSMUST00000114874.5">
    <property type="protein sequence ID" value="ENSMUSP00000110524.4"/>
    <property type="gene ID" value="ENSMUSG00000079598.5"/>
</dbReference>
<dbReference type="GeneID" id="665180"/>
<dbReference type="KEGG" id="mmu:665180"/>
<dbReference type="UCSC" id="uc029vuf.1">
    <property type="organism name" value="mouse"/>
</dbReference>
<dbReference type="AGR" id="MGI:2141402"/>
<dbReference type="CTD" id="154790"/>
<dbReference type="MGI" id="MGI:2141402">
    <property type="gene designation" value="Clec2l"/>
</dbReference>
<dbReference type="VEuPathDB" id="HostDB:ENSMUSG00000079598"/>
<dbReference type="eggNOG" id="KOG1766">
    <property type="taxonomic scope" value="Eukaryota"/>
</dbReference>
<dbReference type="eggNOG" id="KOG4297">
    <property type="taxonomic scope" value="Eukaryota"/>
</dbReference>
<dbReference type="GeneTree" id="ENSGT00940000162503"/>
<dbReference type="HOGENOM" id="CLU_1528662_0_0_1"/>
<dbReference type="InParanoid" id="P0C7M9"/>
<dbReference type="OMA" id="CHTHEAS"/>
<dbReference type="OrthoDB" id="8935730at2759"/>
<dbReference type="PhylomeDB" id="P0C7M9"/>
<dbReference type="TreeFam" id="TF351467"/>
<dbReference type="BioGRID-ORCS" id="665180">
    <property type="hits" value="3 hits in 76 CRISPR screens"/>
</dbReference>
<dbReference type="ChiTaRS" id="Clec2l">
    <property type="organism name" value="mouse"/>
</dbReference>
<dbReference type="PRO" id="PR:P0C7M9"/>
<dbReference type="Proteomes" id="UP000000589">
    <property type="component" value="Chromosome 6"/>
</dbReference>
<dbReference type="RNAct" id="P0C7M9">
    <property type="molecule type" value="protein"/>
</dbReference>
<dbReference type="Bgee" id="ENSMUSG00000079598">
    <property type="expression patterns" value="Expressed in lumbar dorsal root ganglion and 90 other cell types or tissues"/>
</dbReference>
<dbReference type="GO" id="GO:0016020">
    <property type="term" value="C:membrane"/>
    <property type="evidence" value="ECO:0007669"/>
    <property type="project" value="UniProtKB-SubCell"/>
</dbReference>
<dbReference type="GO" id="GO:0030246">
    <property type="term" value="F:carbohydrate binding"/>
    <property type="evidence" value="ECO:0007669"/>
    <property type="project" value="UniProtKB-KW"/>
</dbReference>
<dbReference type="CDD" id="cd03593">
    <property type="entry name" value="CLECT_NK_receptors_like"/>
    <property type="match status" value="1"/>
</dbReference>
<dbReference type="Gene3D" id="3.10.100.10">
    <property type="entry name" value="Mannose-Binding Protein A, subunit A"/>
    <property type="match status" value="1"/>
</dbReference>
<dbReference type="InterPro" id="IPR001304">
    <property type="entry name" value="C-type_lectin-like"/>
</dbReference>
<dbReference type="InterPro" id="IPR016186">
    <property type="entry name" value="C-type_lectin-like/link_sf"/>
</dbReference>
<dbReference type="InterPro" id="IPR016187">
    <property type="entry name" value="CTDL_fold"/>
</dbReference>
<dbReference type="InterPro" id="IPR033992">
    <property type="entry name" value="NKR-like_CTLD"/>
</dbReference>
<dbReference type="PANTHER" id="PTHR47498">
    <property type="entry name" value="C-TYPE LECTIN DOMAIN FAMILY 2 MEMBER L"/>
    <property type="match status" value="1"/>
</dbReference>
<dbReference type="PANTHER" id="PTHR47498:SF1">
    <property type="entry name" value="C-TYPE LECTIN DOMAIN FAMILY 2 MEMBER L"/>
    <property type="match status" value="1"/>
</dbReference>
<dbReference type="Pfam" id="PF00059">
    <property type="entry name" value="Lectin_C"/>
    <property type="match status" value="1"/>
</dbReference>
<dbReference type="SMART" id="SM00034">
    <property type="entry name" value="CLECT"/>
    <property type="match status" value="1"/>
</dbReference>
<dbReference type="SUPFAM" id="SSF56436">
    <property type="entry name" value="C-type lectin-like"/>
    <property type="match status" value="1"/>
</dbReference>
<dbReference type="PROSITE" id="PS00615">
    <property type="entry name" value="C_TYPE_LECTIN_1"/>
    <property type="match status" value="1"/>
</dbReference>
<dbReference type="PROSITE" id="PS50041">
    <property type="entry name" value="C_TYPE_LECTIN_2"/>
    <property type="match status" value="1"/>
</dbReference>
<comment type="subcellular location">
    <subcellularLocation>
        <location evidence="5">Membrane</location>
        <topology evidence="5">Single-pass membrane protein</topology>
    </subcellularLocation>
</comment>
<protein>
    <recommendedName>
        <fullName>C-type lectin domain family 2 member L</fullName>
    </recommendedName>
</protein>
<accession>P0C7M9</accession>
<feature type="chain" id="PRO_0000339386" description="C-type lectin domain family 2 member L">
    <location>
        <begin position="1"/>
        <end position="211"/>
    </location>
</feature>
<feature type="transmembrane region" description="Helical" evidence="2">
    <location>
        <begin position="66"/>
        <end position="86"/>
    </location>
</feature>
<feature type="domain" description="C-type lectin" evidence="3">
    <location>
        <begin position="104"/>
        <end position="206"/>
    </location>
</feature>
<feature type="region of interest" description="Disordered" evidence="4">
    <location>
        <begin position="1"/>
        <end position="53"/>
    </location>
</feature>
<feature type="compositionally biased region" description="Pro residues" evidence="4">
    <location>
        <begin position="10"/>
        <end position="28"/>
    </location>
</feature>
<feature type="modified residue" description="Phosphoserine" evidence="1">
    <location>
        <position position="29"/>
    </location>
</feature>
<feature type="disulfide bond" evidence="3">
    <location>
        <begin position="125"/>
        <end position="205"/>
    </location>
</feature>
<feature type="disulfide bond" evidence="3">
    <location>
        <begin position="184"/>
        <end position="197"/>
    </location>
</feature>
<evidence type="ECO:0000250" key="1">
    <source>
        <dbReference type="UniProtKB" id="Q0ZCA7"/>
    </source>
</evidence>
<evidence type="ECO:0000255" key="2"/>
<evidence type="ECO:0000255" key="3">
    <source>
        <dbReference type="PROSITE-ProRule" id="PRU00040"/>
    </source>
</evidence>
<evidence type="ECO:0000256" key="4">
    <source>
        <dbReference type="SAM" id="MobiDB-lite"/>
    </source>
</evidence>
<evidence type="ECO:0000305" key="5"/>